<protein>
    <recommendedName>
        <fullName evidence="1">Large ribosomal subunit protein uL14</fullName>
    </recommendedName>
    <alternativeName>
        <fullName evidence="2">50S ribosomal protein L14</fullName>
    </alternativeName>
</protein>
<name>RL14_LEIXX</name>
<accession>Q6AD05</accession>
<keyword id="KW-1185">Reference proteome</keyword>
<keyword id="KW-0687">Ribonucleoprotein</keyword>
<keyword id="KW-0689">Ribosomal protein</keyword>
<keyword id="KW-0694">RNA-binding</keyword>
<keyword id="KW-0699">rRNA-binding</keyword>
<dbReference type="EMBL" id="AE016822">
    <property type="protein sequence ID" value="AAT89739.1"/>
    <property type="molecule type" value="Genomic_DNA"/>
</dbReference>
<dbReference type="RefSeq" id="WP_011186725.1">
    <property type="nucleotide sequence ID" value="NC_006087.1"/>
</dbReference>
<dbReference type="SMR" id="Q6AD05"/>
<dbReference type="STRING" id="281090.Lxx20230"/>
<dbReference type="KEGG" id="lxx:Lxx20230"/>
<dbReference type="eggNOG" id="COG0093">
    <property type="taxonomic scope" value="Bacteria"/>
</dbReference>
<dbReference type="HOGENOM" id="CLU_095071_2_1_11"/>
<dbReference type="Proteomes" id="UP000001306">
    <property type="component" value="Chromosome"/>
</dbReference>
<dbReference type="GO" id="GO:0022625">
    <property type="term" value="C:cytosolic large ribosomal subunit"/>
    <property type="evidence" value="ECO:0007669"/>
    <property type="project" value="TreeGrafter"/>
</dbReference>
<dbReference type="GO" id="GO:0070180">
    <property type="term" value="F:large ribosomal subunit rRNA binding"/>
    <property type="evidence" value="ECO:0007669"/>
    <property type="project" value="TreeGrafter"/>
</dbReference>
<dbReference type="GO" id="GO:0003735">
    <property type="term" value="F:structural constituent of ribosome"/>
    <property type="evidence" value="ECO:0007669"/>
    <property type="project" value="InterPro"/>
</dbReference>
<dbReference type="GO" id="GO:0006412">
    <property type="term" value="P:translation"/>
    <property type="evidence" value="ECO:0007669"/>
    <property type="project" value="UniProtKB-UniRule"/>
</dbReference>
<dbReference type="CDD" id="cd00337">
    <property type="entry name" value="Ribosomal_uL14"/>
    <property type="match status" value="1"/>
</dbReference>
<dbReference type="FunFam" id="2.40.150.20:FF:000001">
    <property type="entry name" value="50S ribosomal protein L14"/>
    <property type="match status" value="1"/>
</dbReference>
<dbReference type="Gene3D" id="2.40.150.20">
    <property type="entry name" value="Ribosomal protein L14"/>
    <property type="match status" value="1"/>
</dbReference>
<dbReference type="HAMAP" id="MF_01367">
    <property type="entry name" value="Ribosomal_uL14"/>
    <property type="match status" value="1"/>
</dbReference>
<dbReference type="InterPro" id="IPR000218">
    <property type="entry name" value="Ribosomal_uL14"/>
</dbReference>
<dbReference type="InterPro" id="IPR005745">
    <property type="entry name" value="Ribosomal_uL14_bac-type"/>
</dbReference>
<dbReference type="InterPro" id="IPR019972">
    <property type="entry name" value="Ribosomal_uL14_CS"/>
</dbReference>
<dbReference type="InterPro" id="IPR036853">
    <property type="entry name" value="Ribosomal_uL14_sf"/>
</dbReference>
<dbReference type="NCBIfam" id="TIGR01067">
    <property type="entry name" value="rplN_bact"/>
    <property type="match status" value="1"/>
</dbReference>
<dbReference type="PANTHER" id="PTHR11761">
    <property type="entry name" value="50S/60S RIBOSOMAL PROTEIN L14/L23"/>
    <property type="match status" value="1"/>
</dbReference>
<dbReference type="PANTHER" id="PTHR11761:SF3">
    <property type="entry name" value="LARGE RIBOSOMAL SUBUNIT PROTEIN UL14M"/>
    <property type="match status" value="1"/>
</dbReference>
<dbReference type="Pfam" id="PF00238">
    <property type="entry name" value="Ribosomal_L14"/>
    <property type="match status" value="1"/>
</dbReference>
<dbReference type="SMART" id="SM01374">
    <property type="entry name" value="Ribosomal_L14"/>
    <property type="match status" value="1"/>
</dbReference>
<dbReference type="SUPFAM" id="SSF50193">
    <property type="entry name" value="Ribosomal protein L14"/>
    <property type="match status" value="1"/>
</dbReference>
<dbReference type="PROSITE" id="PS00049">
    <property type="entry name" value="RIBOSOMAL_L14"/>
    <property type="match status" value="1"/>
</dbReference>
<organism>
    <name type="scientific">Leifsonia xyli subsp. xyli (strain CTCB07)</name>
    <dbReference type="NCBI Taxonomy" id="281090"/>
    <lineage>
        <taxon>Bacteria</taxon>
        <taxon>Bacillati</taxon>
        <taxon>Actinomycetota</taxon>
        <taxon>Actinomycetes</taxon>
        <taxon>Micrococcales</taxon>
        <taxon>Microbacteriaceae</taxon>
        <taxon>Leifsonia</taxon>
    </lineage>
</organism>
<reference key="1">
    <citation type="journal article" date="2004" name="Mol. Plant Microbe Interact.">
        <title>The genome sequence of the Gram-positive sugarcane pathogen Leifsonia xyli subsp. xyli.</title>
        <authorList>
            <person name="Monteiro-Vitorello C.B."/>
            <person name="Camargo L.E.A."/>
            <person name="Van Sluys M.A."/>
            <person name="Kitajima J.P."/>
            <person name="Truffi D."/>
            <person name="do Amaral A.M."/>
            <person name="Harakava R."/>
            <person name="de Oliveira J.C.F."/>
            <person name="Wood D."/>
            <person name="de Oliveira M.C."/>
            <person name="Miyaki C.Y."/>
            <person name="Takita M.A."/>
            <person name="da Silva A.C.R."/>
            <person name="Furlan L.R."/>
            <person name="Carraro D.M."/>
            <person name="Camarotte G."/>
            <person name="Almeida N.F. Jr."/>
            <person name="Carrer H."/>
            <person name="Coutinho L.L."/>
            <person name="El-Dorry H.A."/>
            <person name="Ferro M.I.T."/>
            <person name="Gagliardi P.R."/>
            <person name="Giglioti E."/>
            <person name="Goldman M.H.S."/>
            <person name="Goldman G.H."/>
            <person name="Kimura E.T."/>
            <person name="Ferro E.S."/>
            <person name="Kuramae E.E."/>
            <person name="Lemos E.G.M."/>
            <person name="Lemos M.V.F."/>
            <person name="Mauro S.M.Z."/>
            <person name="Machado M.A."/>
            <person name="Marino C.L."/>
            <person name="Menck C.F."/>
            <person name="Nunes L.R."/>
            <person name="Oliveira R.C."/>
            <person name="Pereira G.G."/>
            <person name="Siqueira W."/>
            <person name="de Souza A.A."/>
            <person name="Tsai S.M."/>
            <person name="Zanca A.S."/>
            <person name="Simpson A.J.G."/>
            <person name="Brumbley S.M."/>
            <person name="Setubal J.C."/>
        </authorList>
    </citation>
    <scope>NUCLEOTIDE SEQUENCE [LARGE SCALE GENOMIC DNA]</scope>
    <source>
        <strain>CTCB07</strain>
    </source>
</reference>
<feature type="chain" id="PRO_0000266500" description="Large ribosomal subunit protein uL14">
    <location>
        <begin position="1"/>
        <end position="122"/>
    </location>
</feature>
<comment type="function">
    <text evidence="1">Binds to 23S rRNA. Forms part of two intersubunit bridges in the 70S ribosome.</text>
</comment>
<comment type="subunit">
    <text evidence="1">Part of the 50S ribosomal subunit. Forms a cluster with proteins L3 and L19. In the 70S ribosome, L14 and L19 interact and together make contacts with the 16S rRNA in bridges B5 and B8.</text>
</comment>
<comment type="similarity">
    <text evidence="1">Belongs to the universal ribosomal protein uL14 family.</text>
</comment>
<evidence type="ECO:0000255" key="1">
    <source>
        <dbReference type="HAMAP-Rule" id="MF_01367"/>
    </source>
</evidence>
<evidence type="ECO:0000305" key="2"/>
<sequence>MIQQESRLKVADNTGAKELLTIRVLGGSGRRYAGLGDVIVATVKDAIPGGNVKKGDVVKAVIVRTRKNTRRTDGSYIKFDENAAVILKNDGDPRGTRIFGPVGRELRDKKFMKIISLAPEVL</sequence>
<gene>
    <name evidence="1" type="primary">rplN</name>
    <name type="ordered locus">Lxx20230</name>
</gene>
<proteinExistence type="inferred from homology"/>